<name>MQO_ECO55</name>
<dbReference type="EC" id="1.1.5.4" evidence="1"/>
<dbReference type="EMBL" id="CU928145">
    <property type="protein sequence ID" value="CAU98334.1"/>
    <property type="molecule type" value="Genomic_DNA"/>
</dbReference>
<dbReference type="RefSeq" id="WP_000758086.1">
    <property type="nucleotide sequence ID" value="NC_011748.1"/>
</dbReference>
<dbReference type="SMR" id="B7LAN4"/>
<dbReference type="KEGG" id="eck:EC55989_2465"/>
<dbReference type="HOGENOM" id="CLU_028151_0_0_6"/>
<dbReference type="UniPathway" id="UPA00223">
    <property type="reaction ID" value="UER01008"/>
</dbReference>
<dbReference type="Proteomes" id="UP000000746">
    <property type="component" value="Chromosome"/>
</dbReference>
<dbReference type="GO" id="GO:0047545">
    <property type="term" value="F:2-hydroxyglutarate dehydrogenase activity"/>
    <property type="evidence" value="ECO:0007669"/>
    <property type="project" value="TreeGrafter"/>
</dbReference>
<dbReference type="GO" id="GO:0008924">
    <property type="term" value="F:L-malate dehydrogenase (quinone) activity"/>
    <property type="evidence" value="ECO:0007669"/>
    <property type="project" value="UniProtKB-UniRule"/>
</dbReference>
<dbReference type="GO" id="GO:0006099">
    <property type="term" value="P:tricarboxylic acid cycle"/>
    <property type="evidence" value="ECO:0007669"/>
    <property type="project" value="UniProtKB-UniRule"/>
</dbReference>
<dbReference type="Gene3D" id="3.30.9.10">
    <property type="entry name" value="D-Amino Acid Oxidase, subunit A, domain 2"/>
    <property type="match status" value="1"/>
</dbReference>
<dbReference type="Gene3D" id="3.50.50.60">
    <property type="entry name" value="FAD/NAD(P)-binding domain"/>
    <property type="match status" value="1"/>
</dbReference>
<dbReference type="HAMAP" id="MF_00212">
    <property type="entry name" value="MQO"/>
    <property type="match status" value="1"/>
</dbReference>
<dbReference type="InterPro" id="IPR036188">
    <property type="entry name" value="FAD/NAD-bd_sf"/>
</dbReference>
<dbReference type="InterPro" id="IPR006231">
    <property type="entry name" value="MQO"/>
</dbReference>
<dbReference type="NCBIfam" id="TIGR01320">
    <property type="entry name" value="mal_quin_oxido"/>
    <property type="match status" value="1"/>
</dbReference>
<dbReference type="NCBIfam" id="NF003603">
    <property type="entry name" value="PRK05257.1-1"/>
    <property type="match status" value="1"/>
</dbReference>
<dbReference type="NCBIfam" id="NF003605">
    <property type="entry name" value="PRK05257.1-4"/>
    <property type="match status" value="1"/>
</dbReference>
<dbReference type="NCBIfam" id="NF003606">
    <property type="entry name" value="PRK05257.2-1"/>
    <property type="match status" value="1"/>
</dbReference>
<dbReference type="NCBIfam" id="NF003608">
    <property type="entry name" value="PRK05257.2-4"/>
    <property type="match status" value="1"/>
</dbReference>
<dbReference type="NCBIfam" id="NF003611">
    <property type="entry name" value="PRK05257.3-2"/>
    <property type="match status" value="1"/>
</dbReference>
<dbReference type="NCBIfam" id="NF009875">
    <property type="entry name" value="PRK13339.1"/>
    <property type="match status" value="1"/>
</dbReference>
<dbReference type="PANTHER" id="PTHR43104">
    <property type="entry name" value="L-2-HYDROXYGLUTARATE DEHYDROGENASE, MITOCHONDRIAL"/>
    <property type="match status" value="1"/>
</dbReference>
<dbReference type="PANTHER" id="PTHR43104:SF2">
    <property type="entry name" value="L-2-HYDROXYGLUTARATE DEHYDROGENASE, MITOCHONDRIAL"/>
    <property type="match status" value="1"/>
</dbReference>
<dbReference type="Pfam" id="PF06039">
    <property type="entry name" value="Mqo"/>
    <property type="match status" value="1"/>
</dbReference>
<dbReference type="SUPFAM" id="SSF51905">
    <property type="entry name" value="FAD/NAD(P)-binding domain"/>
    <property type="match status" value="1"/>
</dbReference>
<feature type="chain" id="PRO_1000124769" description="Probable malate:quinone oxidoreductase">
    <location>
        <begin position="1"/>
        <end position="548"/>
    </location>
</feature>
<feature type="region of interest" description="Disordered" evidence="2">
    <location>
        <begin position="521"/>
        <end position="548"/>
    </location>
</feature>
<feature type="compositionally biased region" description="Low complexity" evidence="2">
    <location>
        <begin position="530"/>
        <end position="541"/>
    </location>
</feature>
<sequence length="548" mass="60263">MKKVTAMLFSMAVGLNAVSMAAKAKASEEQETDVLLIGGGIMSATLGTYLRELEPEWSMTMVERLEGVAQESSNGWNNAGTGHSALMELNYTPQNADGSISIEKAVAINEAFQISRQFWAHQVERGVLRTPRSFINTVPHMSFVWGEDNVNFLRARYAALQQSSLFRGMRYSEDHAQIKEWAPLVMEGRDPQQKVAATRTEMGTDVNYGEITRQLIASLQKKSNFSLQLSSEVRALKRNDDNTWTVTVADLKNGTAQNIRAKFVFIGAGGAALKLLQESGIPEAKDYAGFPVGGQFLVSENPDVVNHHLAKVYGKASVGAPPMSVPHIDTRVLDGKRVVLFGPFATFSTKFLKNGSLWDLMSSTTTSNVMPMMHVGLDNFDLVKYLVSQVMLSEEDRFEALKEYYPQAKKEDWRLWQAGQRVQIIKRDAEKGGVLRLGTEVVSDQQGTIAALLGASPGASTAAPIMLDLLEKVFGDRVSSPQWQATLKAIVPSYGRKLNGDVAATERELQYTSEVLGLKYDKPQAADSTPKPQLKPQPVQKEVADIAL</sequence>
<accession>B7LAN4</accession>
<keyword id="KW-0274">FAD</keyword>
<keyword id="KW-0285">Flavoprotein</keyword>
<keyword id="KW-0560">Oxidoreductase</keyword>
<keyword id="KW-1185">Reference proteome</keyword>
<keyword id="KW-0816">Tricarboxylic acid cycle</keyword>
<proteinExistence type="inferred from homology"/>
<reference key="1">
    <citation type="journal article" date="2009" name="PLoS Genet.">
        <title>Organised genome dynamics in the Escherichia coli species results in highly diverse adaptive paths.</title>
        <authorList>
            <person name="Touchon M."/>
            <person name="Hoede C."/>
            <person name="Tenaillon O."/>
            <person name="Barbe V."/>
            <person name="Baeriswyl S."/>
            <person name="Bidet P."/>
            <person name="Bingen E."/>
            <person name="Bonacorsi S."/>
            <person name="Bouchier C."/>
            <person name="Bouvet O."/>
            <person name="Calteau A."/>
            <person name="Chiapello H."/>
            <person name="Clermont O."/>
            <person name="Cruveiller S."/>
            <person name="Danchin A."/>
            <person name="Diard M."/>
            <person name="Dossat C."/>
            <person name="Karoui M.E."/>
            <person name="Frapy E."/>
            <person name="Garry L."/>
            <person name="Ghigo J.M."/>
            <person name="Gilles A.M."/>
            <person name="Johnson J."/>
            <person name="Le Bouguenec C."/>
            <person name="Lescat M."/>
            <person name="Mangenot S."/>
            <person name="Martinez-Jehanne V."/>
            <person name="Matic I."/>
            <person name="Nassif X."/>
            <person name="Oztas S."/>
            <person name="Petit M.A."/>
            <person name="Pichon C."/>
            <person name="Rouy Z."/>
            <person name="Ruf C.S."/>
            <person name="Schneider D."/>
            <person name="Tourret J."/>
            <person name="Vacherie B."/>
            <person name="Vallenet D."/>
            <person name="Medigue C."/>
            <person name="Rocha E.P.C."/>
            <person name="Denamur E."/>
        </authorList>
    </citation>
    <scope>NUCLEOTIDE SEQUENCE [LARGE SCALE GENOMIC DNA]</scope>
    <source>
        <strain>55989 / EAEC</strain>
    </source>
</reference>
<comment type="catalytic activity">
    <reaction evidence="1">
        <text>(S)-malate + a quinone = a quinol + oxaloacetate</text>
        <dbReference type="Rhea" id="RHEA:46012"/>
        <dbReference type="ChEBI" id="CHEBI:15589"/>
        <dbReference type="ChEBI" id="CHEBI:16452"/>
        <dbReference type="ChEBI" id="CHEBI:24646"/>
        <dbReference type="ChEBI" id="CHEBI:132124"/>
        <dbReference type="EC" id="1.1.5.4"/>
    </reaction>
</comment>
<comment type="cofactor">
    <cofactor evidence="1">
        <name>FAD</name>
        <dbReference type="ChEBI" id="CHEBI:57692"/>
    </cofactor>
</comment>
<comment type="pathway">
    <text evidence="1">Carbohydrate metabolism; tricarboxylic acid cycle; oxaloacetate from (S)-malate (quinone route): step 1/1.</text>
</comment>
<comment type="similarity">
    <text evidence="1">Belongs to the MQO family.</text>
</comment>
<gene>
    <name evidence="1" type="primary">mqo</name>
    <name type="ordered locus">EC55989_2465</name>
</gene>
<protein>
    <recommendedName>
        <fullName evidence="1">Probable malate:quinone oxidoreductase</fullName>
        <ecNumber evidence="1">1.1.5.4</ecNumber>
    </recommendedName>
    <alternativeName>
        <fullName evidence="1">MQO</fullName>
    </alternativeName>
    <alternativeName>
        <fullName evidence="1">Malate dehydrogenase [quinone]</fullName>
    </alternativeName>
</protein>
<evidence type="ECO:0000255" key="1">
    <source>
        <dbReference type="HAMAP-Rule" id="MF_00212"/>
    </source>
</evidence>
<evidence type="ECO:0000256" key="2">
    <source>
        <dbReference type="SAM" id="MobiDB-lite"/>
    </source>
</evidence>
<organism>
    <name type="scientific">Escherichia coli (strain 55989 / EAEC)</name>
    <dbReference type="NCBI Taxonomy" id="585055"/>
    <lineage>
        <taxon>Bacteria</taxon>
        <taxon>Pseudomonadati</taxon>
        <taxon>Pseudomonadota</taxon>
        <taxon>Gammaproteobacteria</taxon>
        <taxon>Enterobacterales</taxon>
        <taxon>Enterobacteriaceae</taxon>
        <taxon>Escherichia</taxon>
    </lineage>
</organism>